<dbReference type="EMBL" id="CP000909">
    <property type="protein sequence ID" value="ABY33259.1"/>
    <property type="molecule type" value="Genomic_DNA"/>
</dbReference>
<dbReference type="RefSeq" id="WP_012255915.1">
    <property type="nucleotide sequence ID" value="NC_010175.1"/>
</dbReference>
<dbReference type="RefSeq" id="YP_001633648.1">
    <property type="nucleotide sequence ID" value="NC_010175.1"/>
</dbReference>
<dbReference type="SMR" id="A9WAN1"/>
<dbReference type="FunCoup" id="A9WAN1">
    <property type="interactions" value="367"/>
</dbReference>
<dbReference type="STRING" id="324602.Caur_0001"/>
<dbReference type="EnsemblBacteria" id="ABY33259">
    <property type="protein sequence ID" value="ABY33259"/>
    <property type="gene ID" value="Caur_0001"/>
</dbReference>
<dbReference type="KEGG" id="cau:Caur_0001"/>
<dbReference type="PATRIC" id="fig|324602.8.peg.1"/>
<dbReference type="eggNOG" id="COG0593">
    <property type="taxonomic scope" value="Bacteria"/>
</dbReference>
<dbReference type="HOGENOM" id="CLU_026910_3_1_0"/>
<dbReference type="InParanoid" id="A9WAN1"/>
<dbReference type="Proteomes" id="UP000002008">
    <property type="component" value="Chromosome"/>
</dbReference>
<dbReference type="GO" id="GO:0005737">
    <property type="term" value="C:cytoplasm"/>
    <property type="evidence" value="ECO:0007669"/>
    <property type="project" value="UniProtKB-SubCell"/>
</dbReference>
<dbReference type="GO" id="GO:0005886">
    <property type="term" value="C:plasma membrane"/>
    <property type="evidence" value="ECO:0000318"/>
    <property type="project" value="GO_Central"/>
</dbReference>
<dbReference type="GO" id="GO:0005524">
    <property type="term" value="F:ATP binding"/>
    <property type="evidence" value="ECO:0007669"/>
    <property type="project" value="UniProtKB-UniRule"/>
</dbReference>
<dbReference type="GO" id="GO:0016887">
    <property type="term" value="F:ATP hydrolysis activity"/>
    <property type="evidence" value="ECO:0007669"/>
    <property type="project" value="InterPro"/>
</dbReference>
<dbReference type="GO" id="GO:0003688">
    <property type="term" value="F:DNA replication origin binding"/>
    <property type="evidence" value="ECO:0000318"/>
    <property type="project" value="GO_Central"/>
</dbReference>
<dbReference type="GO" id="GO:0008289">
    <property type="term" value="F:lipid binding"/>
    <property type="evidence" value="ECO:0007669"/>
    <property type="project" value="UniProtKB-KW"/>
</dbReference>
<dbReference type="GO" id="GO:0006260">
    <property type="term" value="P:DNA replication"/>
    <property type="evidence" value="ECO:0000318"/>
    <property type="project" value="GO_Central"/>
</dbReference>
<dbReference type="GO" id="GO:0006270">
    <property type="term" value="P:DNA replication initiation"/>
    <property type="evidence" value="ECO:0000318"/>
    <property type="project" value="GO_Central"/>
</dbReference>
<dbReference type="GO" id="GO:0006275">
    <property type="term" value="P:regulation of DNA replication"/>
    <property type="evidence" value="ECO:0007669"/>
    <property type="project" value="UniProtKB-UniRule"/>
</dbReference>
<dbReference type="CDD" id="cd00009">
    <property type="entry name" value="AAA"/>
    <property type="match status" value="1"/>
</dbReference>
<dbReference type="CDD" id="cd06571">
    <property type="entry name" value="Bac_DnaA_C"/>
    <property type="match status" value="1"/>
</dbReference>
<dbReference type="FunFam" id="1.10.8.60:FF:000003">
    <property type="entry name" value="Chromosomal replication initiator protein DnaA"/>
    <property type="match status" value="1"/>
</dbReference>
<dbReference type="FunFam" id="3.40.50.300:FF:000150">
    <property type="entry name" value="Chromosomal replication initiator protein DnaA"/>
    <property type="match status" value="1"/>
</dbReference>
<dbReference type="Gene3D" id="1.10.1750.10">
    <property type="match status" value="1"/>
</dbReference>
<dbReference type="Gene3D" id="1.10.8.60">
    <property type="match status" value="1"/>
</dbReference>
<dbReference type="Gene3D" id="3.30.300.180">
    <property type="match status" value="1"/>
</dbReference>
<dbReference type="Gene3D" id="3.40.50.300">
    <property type="entry name" value="P-loop containing nucleotide triphosphate hydrolases"/>
    <property type="match status" value="1"/>
</dbReference>
<dbReference type="HAMAP" id="MF_00377">
    <property type="entry name" value="DnaA_bact"/>
    <property type="match status" value="1"/>
</dbReference>
<dbReference type="InterPro" id="IPR003593">
    <property type="entry name" value="AAA+_ATPase"/>
</dbReference>
<dbReference type="InterPro" id="IPR001957">
    <property type="entry name" value="Chromosome_initiator_DnaA"/>
</dbReference>
<dbReference type="InterPro" id="IPR020591">
    <property type="entry name" value="Chromosome_initiator_DnaA-like"/>
</dbReference>
<dbReference type="InterPro" id="IPR018312">
    <property type="entry name" value="Chromosome_initiator_DnaA_CS"/>
</dbReference>
<dbReference type="InterPro" id="IPR013159">
    <property type="entry name" value="DnaA_C"/>
</dbReference>
<dbReference type="InterPro" id="IPR013317">
    <property type="entry name" value="DnaA_dom"/>
</dbReference>
<dbReference type="InterPro" id="IPR038454">
    <property type="entry name" value="DnaA_N_sf"/>
</dbReference>
<dbReference type="InterPro" id="IPR027417">
    <property type="entry name" value="P-loop_NTPase"/>
</dbReference>
<dbReference type="InterPro" id="IPR010921">
    <property type="entry name" value="Trp_repressor/repl_initiator"/>
</dbReference>
<dbReference type="NCBIfam" id="TIGR00362">
    <property type="entry name" value="DnaA"/>
    <property type="match status" value="1"/>
</dbReference>
<dbReference type="PANTHER" id="PTHR30050">
    <property type="entry name" value="CHROMOSOMAL REPLICATION INITIATOR PROTEIN DNAA"/>
    <property type="match status" value="1"/>
</dbReference>
<dbReference type="PANTHER" id="PTHR30050:SF2">
    <property type="entry name" value="CHROMOSOMAL REPLICATION INITIATOR PROTEIN DNAA"/>
    <property type="match status" value="1"/>
</dbReference>
<dbReference type="Pfam" id="PF00308">
    <property type="entry name" value="Bac_DnaA"/>
    <property type="match status" value="1"/>
</dbReference>
<dbReference type="Pfam" id="PF08299">
    <property type="entry name" value="Bac_DnaA_C"/>
    <property type="match status" value="1"/>
</dbReference>
<dbReference type="PRINTS" id="PR00051">
    <property type="entry name" value="DNAA"/>
</dbReference>
<dbReference type="SMART" id="SM00382">
    <property type="entry name" value="AAA"/>
    <property type="match status" value="1"/>
</dbReference>
<dbReference type="SMART" id="SM00760">
    <property type="entry name" value="Bac_DnaA_C"/>
    <property type="match status" value="1"/>
</dbReference>
<dbReference type="SUPFAM" id="SSF52540">
    <property type="entry name" value="P-loop containing nucleoside triphosphate hydrolases"/>
    <property type="match status" value="1"/>
</dbReference>
<dbReference type="SUPFAM" id="SSF48295">
    <property type="entry name" value="TrpR-like"/>
    <property type="match status" value="1"/>
</dbReference>
<dbReference type="PROSITE" id="PS01008">
    <property type="entry name" value="DNAA"/>
    <property type="match status" value="1"/>
</dbReference>
<keyword id="KW-0067">ATP-binding</keyword>
<keyword id="KW-0963">Cytoplasm</keyword>
<keyword id="KW-0235">DNA replication</keyword>
<keyword id="KW-0238">DNA-binding</keyword>
<keyword id="KW-0446">Lipid-binding</keyword>
<keyword id="KW-0547">Nucleotide-binding</keyword>
<keyword id="KW-1185">Reference proteome</keyword>
<feature type="chain" id="PRO_1000079942" description="Chromosomal replication initiator protein DnaA">
    <location>
        <begin position="1"/>
        <end position="479"/>
    </location>
</feature>
<feature type="region of interest" description="Domain I, interacts with DnaA modulators" evidence="1">
    <location>
        <begin position="1"/>
        <end position="71"/>
    </location>
</feature>
<feature type="region of interest" description="Domain II" evidence="1">
    <location>
        <begin position="71"/>
        <end position="138"/>
    </location>
</feature>
<feature type="region of interest" description="Disordered" evidence="2">
    <location>
        <begin position="86"/>
        <end position="106"/>
    </location>
</feature>
<feature type="region of interest" description="Domain III, AAA+ region" evidence="1">
    <location>
        <begin position="139"/>
        <end position="355"/>
    </location>
</feature>
<feature type="region of interest" description="Domain IV, binds dsDNA" evidence="1">
    <location>
        <begin position="356"/>
        <end position="479"/>
    </location>
</feature>
<feature type="compositionally biased region" description="Polar residues" evidence="2">
    <location>
        <begin position="86"/>
        <end position="99"/>
    </location>
</feature>
<feature type="binding site" evidence="1">
    <location>
        <position position="183"/>
    </location>
    <ligand>
        <name>ATP</name>
        <dbReference type="ChEBI" id="CHEBI:30616"/>
    </ligand>
</feature>
<feature type="binding site" evidence="1">
    <location>
        <position position="185"/>
    </location>
    <ligand>
        <name>ATP</name>
        <dbReference type="ChEBI" id="CHEBI:30616"/>
    </ligand>
</feature>
<feature type="binding site" evidence="1">
    <location>
        <position position="186"/>
    </location>
    <ligand>
        <name>ATP</name>
        <dbReference type="ChEBI" id="CHEBI:30616"/>
    </ligand>
</feature>
<feature type="binding site" evidence="1">
    <location>
        <position position="187"/>
    </location>
    <ligand>
        <name>ATP</name>
        <dbReference type="ChEBI" id="CHEBI:30616"/>
    </ligand>
</feature>
<gene>
    <name evidence="1" type="primary">dnaA</name>
    <name type="ordered locus">Caur_0001</name>
</gene>
<sequence>MNLTQIWKATLSALQTQTSRHDYEALLRPATLLSLDNGAAFIGVSSPGQKEGLENRLLMPLRNALARVVGYPVQVQVLIANLNSRTEPSPSLTLSNGSRLMSDPEPVVAETPAPALTPGNGTGERVVQLDLASAMRSGMLNPRYTFSSFIVGSSNRLAHAACLAVADNPGQAYNPLFLYGGVGLGKTHLLHAIGNRVLDRDPEINVLYVSSEKFTNDLINAIRRQQTEEFRMRYRNIDVLLIDDIQFIAGKDATQEEFFHTFNTLHSAAKHIVISSDRPPKAILTLEERLRSRFEWGLIVDVQPPDLETRTAILRAKAEQMSVHVPDEVIDFLAHKIQSNIRELEGSLNRVAAYAELNRAPITIETATAALADLLGNQRRRRISAEAILQIVSEHYGIEVEQLRARNRSRHVVVPRQVAMYLLREETESSLVDIGNLLGGRDHTTVMYGCEKIAEEINSDSRLRSEVMAIRERIQMLRG</sequence>
<accession>A9WAN1</accession>
<organism>
    <name type="scientific">Chloroflexus aurantiacus (strain ATCC 29366 / DSM 635 / J-10-fl)</name>
    <dbReference type="NCBI Taxonomy" id="324602"/>
    <lineage>
        <taxon>Bacteria</taxon>
        <taxon>Bacillati</taxon>
        <taxon>Chloroflexota</taxon>
        <taxon>Chloroflexia</taxon>
        <taxon>Chloroflexales</taxon>
        <taxon>Chloroflexineae</taxon>
        <taxon>Chloroflexaceae</taxon>
        <taxon>Chloroflexus</taxon>
    </lineage>
</organism>
<proteinExistence type="inferred from homology"/>
<name>DNAA_CHLAA</name>
<comment type="function">
    <text evidence="1">Plays an essential role in the initiation and regulation of chromosomal replication. ATP-DnaA binds to the origin of replication (oriC) to initiate formation of the DNA replication initiation complex once per cell cycle. Binds the DnaA box (a 9 base pair repeat at the origin) and separates the double-stranded (ds)DNA. Forms a right-handed helical filament on oriC DNA; dsDNA binds to the exterior of the filament while single-stranded (ss)DNA is stabiized in the filament's interior. The ATP-DnaA-oriC complex binds and stabilizes one strand of the AT-rich DNA unwinding element (DUE), permitting loading of DNA polymerase. After initiation quickly degrades to an ADP-DnaA complex that is not apt for DNA replication. Binds acidic phospholipids.</text>
</comment>
<comment type="subunit">
    <text evidence="1">Oligomerizes as a right-handed, spiral filament on DNA at oriC.</text>
</comment>
<comment type="subcellular location">
    <subcellularLocation>
        <location evidence="1">Cytoplasm</location>
    </subcellularLocation>
</comment>
<comment type="domain">
    <text evidence="1">Domain I is involved in oligomerization and binding regulators, domain II is flexibile and of varying length in different bacteria, domain III forms the AAA+ region, while domain IV binds dsDNA.</text>
</comment>
<comment type="similarity">
    <text evidence="1">Belongs to the DnaA family.</text>
</comment>
<evidence type="ECO:0000255" key="1">
    <source>
        <dbReference type="HAMAP-Rule" id="MF_00377"/>
    </source>
</evidence>
<evidence type="ECO:0000256" key="2">
    <source>
        <dbReference type="SAM" id="MobiDB-lite"/>
    </source>
</evidence>
<reference key="1">
    <citation type="journal article" date="2011" name="BMC Genomics">
        <title>Complete genome sequence of the filamentous anoxygenic phototrophic bacterium Chloroflexus aurantiacus.</title>
        <authorList>
            <person name="Tang K.H."/>
            <person name="Barry K."/>
            <person name="Chertkov O."/>
            <person name="Dalin E."/>
            <person name="Han C.S."/>
            <person name="Hauser L.J."/>
            <person name="Honchak B.M."/>
            <person name="Karbach L.E."/>
            <person name="Land M.L."/>
            <person name="Lapidus A."/>
            <person name="Larimer F.W."/>
            <person name="Mikhailova N."/>
            <person name="Pitluck S."/>
            <person name="Pierson B.K."/>
            <person name="Blankenship R.E."/>
        </authorList>
    </citation>
    <scope>NUCLEOTIDE SEQUENCE [LARGE SCALE GENOMIC DNA]</scope>
    <source>
        <strain>ATCC 29366 / DSM 635 / J-10-fl</strain>
    </source>
</reference>
<protein>
    <recommendedName>
        <fullName evidence="1">Chromosomal replication initiator protein DnaA</fullName>
    </recommendedName>
</protein>